<reference key="1">
    <citation type="journal article" date="2005" name="Nat. Biotechnol.">
        <title>The genome sequence of the ethanologenic bacterium Zymomonas mobilis ZM4.</title>
        <authorList>
            <person name="Seo J.-S."/>
            <person name="Chong H."/>
            <person name="Park H.S."/>
            <person name="Yoon K.-O."/>
            <person name="Jung C."/>
            <person name="Kim J.J."/>
            <person name="Hong J.H."/>
            <person name="Kim H."/>
            <person name="Kim J.-H."/>
            <person name="Kil J.-I."/>
            <person name="Park C.J."/>
            <person name="Oh H.-M."/>
            <person name="Lee J.-S."/>
            <person name="Jin S.-J."/>
            <person name="Um H.-W."/>
            <person name="Lee H.-J."/>
            <person name="Oh S.-J."/>
            <person name="Kim J.Y."/>
            <person name="Kang H.L."/>
            <person name="Lee S.Y."/>
            <person name="Lee K.J."/>
            <person name="Kang H.S."/>
        </authorList>
    </citation>
    <scope>NUCLEOTIDE SEQUENCE [LARGE SCALE GENOMIC DNA]</scope>
    <source>
        <strain>ATCC 31821 / ZM4 / CP4</strain>
    </source>
</reference>
<gene>
    <name evidence="1" type="primary">glyA</name>
    <name type="ordered locus">ZMO1201</name>
</gene>
<accession>Q5NN85</accession>
<evidence type="ECO:0000255" key="1">
    <source>
        <dbReference type="HAMAP-Rule" id="MF_00051"/>
    </source>
</evidence>
<feature type="chain" id="PRO_0000113707" description="Serine hydroxymethyltransferase">
    <location>
        <begin position="1"/>
        <end position="429"/>
    </location>
</feature>
<feature type="binding site" evidence="1">
    <location>
        <position position="126"/>
    </location>
    <ligand>
        <name>(6S)-5,6,7,8-tetrahydrofolate</name>
        <dbReference type="ChEBI" id="CHEBI:57453"/>
    </ligand>
</feature>
<feature type="binding site" evidence="1">
    <location>
        <begin position="130"/>
        <end position="132"/>
    </location>
    <ligand>
        <name>(6S)-5,6,7,8-tetrahydrofolate</name>
        <dbReference type="ChEBI" id="CHEBI:57453"/>
    </ligand>
</feature>
<feature type="site" description="Plays an important role in substrate specificity" evidence="1">
    <location>
        <position position="234"/>
    </location>
</feature>
<feature type="modified residue" description="N6-(pyridoxal phosphate)lysine" evidence="1">
    <location>
        <position position="235"/>
    </location>
</feature>
<proteinExistence type="inferred from homology"/>
<keyword id="KW-0028">Amino-acid biosynthesis</keyword>
<keyword id="KW-0963">Cytoplasm</keyword>
<keyword id="KW-0554">One-carbon metabolism</keyword>
<keyword id="KW-0663">Pyridoxal phosphate</keyword>
<keyword id="KW-1185">Reference proteome</keyword>
<keyword id="KW-0808">Transferase</keyword>
<sequence length="429" mass="45813">MTKETASFFTDRLAAADPDVLTAINHELNRQRKQIELIASENIVSRAVLEAQGSVFTNKYAEGYPGKRYYQGCAPSDEIETLAIERAKKLFGSEFVNVQPHSGAQANGAVLLAVAKPGDTIMGLSLDAGGHLTHGAKAAMSGKWFNAVQYAVHPETQLIDYDQVRDLALKNKPRVIIAGGSAYPRHIDFAFFRKVADEVGATFMVDMAHFAGLVAGGVHPSPVPHAHITTTTTHKTLRGPRGGMILTDDPALAKKINSAVFPGMQGGPLMHVIAAKAVAFGEALQPSFKEYAKAVVENAQALAARLKERGSDLVTGGTDTHLALVDLRPLGVTGRDADCALERAGITCNKNGIPFDPLPPVKTSGIRLGSPAATTRGFRKAEFLQVADMIADVLDALSSKGEQGDPAVETAVRQRVEALCDRFPLYPEL</sequence>
<name>GLYA_ZYMMO</name>
<protein>
    <recommendedName>
        <fullName evidence="1">Serine hydroxymethyltransferase</fullName>
        <shortName evidence="1">SHMT</shortName>
        <shortName evidence="1">Serine methylase</shortName>
        <ecNumber evidence="1">2.1.2.1</ecNumber>
    </recommendedName>
</protein>
<dbReference type="EC" id="2.1.2.1" evidence="1"/>
<dbReference type="EMBL" id="AE008692">
    <property type="protein sequence ID" value="AAV89825.1"/>
    <property type="molecule type" value="Genomic_DNA"/>
</dbReference>
<dbReference type="RefSeq" id="WP_011241023.1">
    <property type="nucleotide sequence ID" value="NZ_CP035711.1"/>
</dbReference>
<dbReference type="SMR" id="Q5NN85"/>
<dbReference type="STRING" id="264203.ZMO1201"/>
<dbReference type="GeneID" id="79903677"/>
<dbReference type="KEGG" id="zmo:ZMO1201"/>
<dbReference type="eggNOG" id="COG0112">
    <property type="taxonomic scope" value="Bacteria"/>
</dbReference>
<dbReference type="HOGENOM" id="CLU_022477_2_1_5"/>
<dbReference type="UniPathway" id="UPA00193"/>
<dbReference type="UniPathway" id="UPA00288">
    <property type="reaction ID" value="UER01023"/>
</dbReference>
<dbReference type="Proteomes" id="UP000001173">
    <property type="component" value="Chromosome"/>
</dbReference>
<dbReference type="GO" id="GO:0005829">
    <property type="term" value="C:cytosol"/>
    <property type="evidence" value="ECO:0007669"/>
    <property type="project" value="TreeGrafter"/>
</dbReference>
<dbReference type="GO" id="GO:0004372">
    <property type="term" value="F:glycine hydroxymethyltransferase activity"/>
    <property type="evidence" value="ECO:0007669"/>
    <property type="project" value="UniProtKB-UniRule"/>
</dbReference>
<dbReference type="GO" id="GO:0030170">
    <property type="term" value="F:pyridoxal phosphate binding"/>
    <property type="evidence" value="ECO:0007669"/>
    <property type="project" value="UniProtKB-UniRule"/>
</dbReference>
<dbReference type="GO" id="GO:0019264">
    <property type="term" value="P:glycine biosynthetic process from serine"/>
    <property type="evidence" value="ECO:0007669"/>
    <property type="project" value="UniProtKB-UniRule"/>
</dbReference>
<dbReference type="GO" id="GO:0035999">
    <property type="term" value="P:tetrahydrofolate interconversion"/>
    <property type="evidence" value="ECO:0007669"/>
    <property type="project" value="UniProtKB-UniRule"/>
</dbReference>
<dbReference type="CDD" id="cd00378">
    <property type="entry name" value="SHMT"/>
    <property type="match status" value="1"/>
</dbReference>
<dbReference type="FunFam" id="3.40.640.10:FF:000001">
    <property type="entry name" value="Serine hydroxymethyltransferase"/>
    <property type="match status" value="1"/>
</dbReference>
<dbReference type="Gene3D" id="3.90.1150.10">
    <property type="entry name" value="Aspartate Aminotransferase, domain 1"/>
    <property type="match status" value="1"/>
</dbReference>
<dbReference type="Gene3D" id="3.40.640.10">
    <property type="entry name" value="Type I PLP-dependent aspartate aminotransferase-like (Major domain)"/>
    <property type="match status" value="1"/>
</dbReference>
<dbReference type="HAMAP" id="MF_00051">
    <property type="entry name" value="SHMT"/>
    <property type="match status" value="1"/>
</dbReference>
<dbReference type="InterPro" id="IPR015424">
    <property type="entry name" value="PyrdxlP-dep_Trfase"/>
</dbReference>
<dbReference type="InterPro" id="IPR015421">
    <property type="entry name" value="PyrdxlP-dep_Trfase_major"/>
</dbReference>
<dbReference type="InterPro" id="IPR015422">
    <property type="entry name" value="PyrdxlP-dep_Trfase_small"/>
</dbReference>
<dbReference type="InterPro" id="IPR001085">
    <property type="entry name" value="Ser_HO-MeTrfase"/>
</dbReference>
<dbReference type="InterPro" id="IPR049943">
    <property type="entry name" value="Ser_HO-MeTrfase-like"/>
</dbReference>
<dbReference type="InterPro" id="IPR019798">
    <property type="entry name" value="Ser_HO-MeTrfase_PLP_BS"/>
</dbReference>
<dbReference type="InterPro" id="IPR039429">
    <property type="entry name" value="SHMT-like_dom"/>
</dbReference>
<dbReference type="NCBIfam" id="NF000586">
    <property type="entry name" value="PRK00011.1"/>
    <property type="match status" value="1"/>
</dbReference>
<dbReference type="PANTHER" id="PTHR11680">
    <property type="entry name" value="SERINE HYDROXYMETHYLTRANSFERASE"/>
    <property type="match status" value="1"/>
</dbReference>
<dbReference type="PANTHER" id="PTHR11680:SF35">
    <property type="entry name" value="SERINE HYDROXYMETHYLTRANSFERASE 1"/>
    <property type="match status" value="1"/>
</dbReference>
<dbReference type="Pfam" id="PF00464">
    <property type="entry name" value="SHMT"/>
    <property type="match status" value="1"/>
</dbReference>
<dbReference type="PIRSF" id="PIRSF000412">
    <property type="entry name" value="SHMT"/>
    <property type="match status" value="1"/>
</dbReference>
<dbReference type="SUPFAM" id="SSF53383">
    <property type="entry name" value="PLP-dependent transferases"/>
    <property type="match status" value="1"/>
</dbReference>
<dbReference type="PROSITE" id="PS00096">
    <property type="entry name" value="SHMT"/>
    <property type="match status" value="1"/>
</dbReference>
<comment type="function">
    <text evidence="1">Catalyzes the reversible interconversion of serine and glycine with tetrahydrofolate (THF) serving as the one-carbon carrier. This reaction serves as the major source of one-carbon groups required for the biosynthesis of purines, thymidylate, methionine, and other important biomolecules. Also exhibits THF-independent aldolase activity toward beta-hydroxyamino acids, producing glycine and aldehydes, via a retro-aldol mechanism.</text>
</comment>
<comment type="catalytic activity">
    <reaction evidence="1">
        <text>(6R)-5,10-methylene-5,6,7,8-tetrahydrofolate + glycine + H2O = (6S)-5,6,7,8-tetrahydrofolate + L-serine</text>
        <dbReference type="Rhea" id="RHEA:15481"/>
        <dbReference type="ChEBI" id="CHEBI:15377"/>
        <dbReference type="ChEBI" id="CHEBI:15636"/>
        <dbReference type="ChEBI" id="CHEBI:33384"/>
        <dbReference type="ChEBI" id="CHEBI:57305"/>
        <dbReference type="ChEBI" id="CHEBI:57453"/>
        <dbReference type="EC" id="2.1.2.1"/>
    </reaction>
</comment>
<comment type="cofactor">
    <cofactor evidence="1">
        <name>pyridoxal 5'-phosphate</name>
        <dbReference type="ChEBI" id="CHEBI:597326"/>
    </cofactor>
</comment>
<comment type="pathway">
    <text evidence="1">One-carbon metabolism; tetrahydrofolate interconversion.</text>
</comment>
<comment type="pathway">
    <text evidence="1">Amino-acid biosynthesis; glycine biosynthesis; glycine from L-serine: step 1/1.</text>
</comment>
<comment type="subunit">
    <text evidence="1">Homodimer.</text>
</comment>
<comment type="subcellular location">
    <subcellularLocation>
        <location evidence="1">Cytoplasm</location>
    </subcellularLocation>
</comment>
<comment type="similarity">
    <text evidence="1">Belongs to the SHMT family.</text>
</comment>
<organism>
    <name type="scientific">Zymomonas mobilis subsp. mobilis (strain ATCC 31821 / ZM4 / CP4)</name>
    <dbReference type="NCBI Taxonomy" id="264203"/>
    <lineage>
        <taxon>Bacteria</taxon>
        <taxon>Pseudomonadati</taxon>
        <taxon>Pseudomonadota</taxon>
        <taxon>Alphaproteobacteria</taxon>
        <taxon>Sphingomonadales</taxon>
        <taxon>Zymomonadaceae</taxon>
        <taxon>Zymomonas</taxon>
    </lineage>
</organism>